<sequence>MKRIGVLTSGGDSPGMNAAIRAVVRKAIFHDIEVYGIYHGYAGLISGHIEKLELGSVGDIIHRGGTKLYTARCPEFKDPEVRLKGIEQLKKHGIEGLVVIGGDGSYQGAKKLTEQGFPCVGVPGTIDNDIPGTDFTIGFDTALNTVIDAIDKIRDTATSHERTYVIEVMGRHAGDIALWAGLADGAETILIPEEEYDMEDVIARLKRGSERGKKHSIIVVAEGVGSAIDIGKHIEEATNFDTRVTVLGHVQRGGSPSAQDRVLASRLGARAVELLIAGKGGRCVGIQDNKLVDHDIIEALAQKHTIDKDMYQLSKELSI</sequence>
<feature type="chain" id="PRO_1000059738" description="ATP-dependent 6-phosphofructokinase">
    <location>
        <begin position="1"/>
        <end position="319"/>
    </location>
</feature>
<feature type="active site" description="Proton acceptor" evidence="1">
    <location>
        <position position="127"/>
    </location>
</feature>
<feature type="binding site" evidence="1">
    <location>
        <position position="11"/>
    </location>
    <ligand>
        <name>ATP</name>
        <dbReference type="ChEBI" id="CHEBI:30616"/>
    </ligand>
</feature>
<feature type="binding site" evidence="1">
    <location>
        <begin position="21"/>
        <end position="25"/>
    </location>
    <ligand>
        <name>ADP</name>
        <dbReference type="ChEBI" id="CHEBI:456216"/>
        <note>allosteric activator; ligand shared between dimeric partners</note>
    </ligand>
</feature>
<feature type="binding site" evidence="1">
    <location>
        <begin position="72"/>
        <end position="73"/>
    </location>
    <ligand>
        <name>ATP</name>
        <dbReference type="ChEBI" id="CHEBI:30616"/>
    </ligand>
</feature>
<feature type="binding site" evidence="1">
    <location>
        <begin position="102"/>
        <end position="105"/>
    </location>
    <ligand>
        <name>ATP</name>
        <dbReference type="ChEBI" id="CHEBI:30616"/>
    </ligand>
</feature>
<feature type="binding site" evidence="1">
    <location>
        <position position="103"/>
    </location>
    <ligand>
        <name>Mg(2+)</name>
        <dbReference type="ChEBI" id="CHEBI:18420"/>
        <note>catalytic</note>
    </ligand>
</feature>
<feature type="binding site" description="in other chain" evidence="1">
    <location>
        <begin position="125"/>
        <end position="127"/>
    </location>
    <ligand>
        <name>substrate</name>
        <note>ligand shared between dimeric partners</note>
    </ligand>
</feature>
<feature type="binding site" description="in other chain" evidence="1">
    <location>
        <position position="154"/>
    </location>
    <ligand>
        <name>ADP</name>
        <dbReference type="ChEBI" id="CHEBI:456216"/>
        <note>allosteric activator; ligand shared between dimeric partners</note>
    </ligand>
</feature>
<feature type="binding site" evidence="1">
    <location>
        <position position="162"/>
    </location>
    <ligand>
        <name>substrate</name>
        <note>ligand shared between dimeric partners</note>
    </ligand>
</feature>
<feature type="binding site" description="in other chain" evidence="1">
    <location>
        <begin position="169"/>
        <end position="171"/>
    </location>
    <ligand>
        <name>substrate</name>
        <note>ligand shared between dimeric partners</note>
    </ligand>
</feature>
<feature type="binding site" description="in other chain" evidence="1">
    <location>
        <begin position="185"/>
        <end position="187"/>
    </location>
    <ligand>
        <name>ADP</name>
        <dbReference type="ChEBI" id="CHEBI:456216"/>
        <note>allosteric activator; ligand shared between dimeric partners</note>
    </ligand>
</feature>
<feature type="binding site" description="in other chain" evidence="1">
    <location>
        <position position="211"/>
    </location>
    <ligand>
        <name>ADP</name>
        <dbReference type="ChEBI" id="CHEBI:456216"/>
        <note>allosteric activator; ligand shared between dimeric partners</note>
    </ligand>
</feature>
<feature type="binding site" description="in other chain" evidence="1">
    <location>
        <begin position="213"/>
        <end position="215"/>
    </location>
    <ligand>
        <name>ADP</name>
        <dbReference type="ChEBI" id="CHEBI:456216"/>
        <note>allosteric activator; ligand shared between dimeric partners</note>
    </ligand>
</feature>
<feature type="binding site" description="in other chain" evidence="1">
    <location>
        <position position="222"/>
    </location>
    <ligand>
        <name>substrate</name>
        <note>ligand shared between dimeric partners</note>
    </ligand>
</feature>
<feature type="binding site" evidence="1">
    <location>
        <position position="243"/>
    </location>
    <ligand>
        <name>substrate</name>
        <note>ligand shared between dimeric partners</note>
    </ligand>
</feature>
<feature type="binding site" description="in other chain" evidence="1">
    <location>
        <begin position="249"/>
        <end position="252"/>
    </location>
    <ligand>
        <name>substrate</name>
        <note>ligand shared between dimeric partners</note>
    </ligand>
</feature>
<reference key="1">
    <citation type="journal article" date="2007" name="J. Bacteriol.">
        <title>The complete genome sequence of Bacillus thuringiensis Al Hakam.</title>
        <authorList>
            <person name="Challacombe J.F."/>
            <person name="Altherr M.R."/>
            <person name="Xie G."/>
            <person name="Bhotika S.S."/>
            <person name="Brown N."/>
            <person name="Bruce D."/>
            <person name="Campbell C.S."/>
            <person name="Campbell M.L."/>
            <person name="Chen J."/>
            <person name="Chertkov O."/>
            <person name="Cleland C."/>
            <person name="Dimitrijevic M."/>
            <person name="Doggett N.A."/>
            <person name="Fawcett J.J."/>
            <person name="Glavina T."/>
            <person name="Goodwin L.A."/>
            <person name="Green L.D."/>
            <person name="Han C.S."/>
            <person name="Hill K.K."/>
            <person name="Hitchcock P."/>
            <person name="Jackson P.J."/>
            <person name="Keim P."/>
            <person name="Kewalramani A.R."/>
            <person name="Longmire J."/>
            <person name="Lucas S."/>
            <person name="Malfatti S."/>
            <person name="Martinez D."/>
            <person name="McMurry K."/>
            <person name="Meincke L.J."/>
            <person name="Misra M."/>
            <person name="Moseman B.L."/>
            <person name="Mundt M."/>
            <person name="Munk A.C."/>
            <person name="Okinaka R.T."/>
            <person name="Parson-Quintana B."/>
            <person name="Reilly L.P."/>
            <person name="Richardson P."/>
            <person name="Robinson D.L."/>
            <person name="Saunders E."/>
            <person name="Tapia R."/>
            <person name="Tesmer J.G."/>
            <person name="Thayer N."/>
            <person name="Thompson L.S."/>
            <person name="Tice H."/>
            <person name="Ticknor L.O."/>
            <person name="Wills P.L."/>
            <person name="Gilna P."/>
            <person name="Brettin T.S."/>
        </authorList>
    </citation>
    <scope>NUCLEOTIDE SEQUENCE [LARGE SCALE GENOMIC DNA]</scope>
    <source>
        <strain>Al Hakam</strain>
    </source>
</reference>
<evidence type="ECO:0000255" key="1">
    <source>
        <dbReference type="HAMAP-Rule" id="MF_00339"/>
    </source>
</evidence>
<name>PFKA_BACAH</name>
<protein>
    <recommendedName>
        <fullName evidence="1">ATP-dependent 6-phosphofructokinase</fullName>
        <shortName evidence="1">ATP-PFK</shortName>
        <shortName evidence="1">Phosphofructokinase</shortName>
        <ecNumber evidence="1">2.7.1.11</ecNumber>
    </recommendedName>
    <alternativeName>
        <fullName evidence="1">Phosphohexokinase</fullName>
    </alternativeName>
</protein>
<gene>
    <name evidence="1" type="primary">pfkA</name>
    <name type="ordered locus">BALH_4182</name>
</gene>
<comment type="function">
    <text evidence="1">Catalyzes the phosphorylation of D-fructose 6-phosphate to fructose 1,6-bisphosphate by ATP, the first committing step of glycolysis.</text>
</comment>
<comment type="catalytic activity">
    <reaction evidence="1">
        <text>beta-D-fructose 6-phosphate + ATP = beta-D-fructose 1,6-bisphosphate + ADP + H(+)</text>
        <dbReference type="Rhea" id="RHEA:16109"/>
        <dbReference type="ChEBI" id="CHEBI:15378"/>
        <dbReference type="ChEBI" id="CHEBI:30616"/>
        <dbReference type="ChEBI" id="CHEBI:32966"/>
        <dbReference type="ChEBI" id="CHEBI:57634"/>
        <dbReference type="ChEBI" id="CHEBI:456216"/>
        <dbReference type="EC" id="2.7.1.11"/>
    </reaction>
</comment>
<comment type="cofactor">
    <cofactor evidence="1">
        <name>Mg(2+)</name>
        <dbReference type="ChEBI" id="CHEBI:18420"/>
    </cofactor>
</comment>
<comment type="activity regulation">
    <text evidence="1">Allosterically activated by ADP and other diphosphonucleosides, and allosterically inhibited by phosphoenolpyruvate.</text>
</comment>
<comment type="pathway">
    <text evidence="1">Carbohydrate degradation; glycolysis; D-glyceraldehyde 3-phosphate and glycerone phosphate from D-glucose: step 3/4.</text>
</comment>
<comment type="subunit">
    <text evidence="1">Homotetramer.</text>
</comment>
<comment type="subcellular location">
    <subcellularLocation>
        <location evidence="1">Cytoplasm</location>
    </subcellularLocation>
</comment>
<comment type="similarity">
    <text evidence="1">Belongs to the phosphofructokinase type A (PFKA) family. ATP-dependent PFK group I subfamily. Prokaryotic clade 'B1' sub-subfamily.</text>
</comment>
<keyword id="KW-0021">Allosteric enzyme</keyword>
<keyword id="KW-0067">ATP-binding</keyword>
<keyword id="KW-0963">Cytoplasm</keyword>
<keyword id="KW-0324">Glycolysis</keyword>
<keyword id="KW-0418">Kinase</keyword>
<keyword id="KW-0460">Magnesium</keyword>
<keyword id="KW-0479">Metal-binding</keyword>
<keyword id="KW-0547">Nucleotide-binding</keyword>
<keyword id="KW-0808">Transferase</keyword>
<accession>A0RJJ6</accession>
<organism>
    <name type="scientific">Bacillus thuringiensis (strain Al Hakam)</name>
    <dbReference type="NCBI Taxonomy" id="412694"/>
    <lineage>
        <taxon>Bacteria</taxon>
        <taxon>Bacillati</taxon>
        <taxon>Bacillota</taxon>
        <taxon>Bacilli</taxon>
        <taxon>Bacillales</taxon>
        <taxon>Bacillaceae</taxon>
        <taxon>Bacillus</taxon>
        <taxon>Bacillus cereus group</taxon>
    </lineage>
</organism>
<proteinExistence type="inferred from homology"/>
<dbReference type="EC" id="2.7.1.11" evidence="1"/>
<dbReference type="EMBL" id="CP000485">
    <property type="protein sequence ID" value="ABK87389.1"/>
    <property type="molecule type" value="Genomic_DNA"/>
</dbReference>
<dbReference type="RefSeq" id="WP_000821163.1">
    <property type="nucleotide sequence ID" value="NC_008600.1"/>
</dbReference>
<dbReference type="SMR" id="A0RJJ6"/>
<dbReference type="GeneID" id="93006511"/>
<dbReference type="KEGG" id="btl:BALH_4182"/>
<dbReference type="HOGENOM" id="CLU_020655_0_1_9"/>
<dbReference type="UniPathway" id="UPA00109">
    <property type="reaction ID" value="UER00182"/>
</dbReference>
<dbReference type="GO" id="GO:0005945">
    <property type="term" value="C:6-phosphofructokinase complex"/>
    <property type="evidence" value="ECO:0007669"/>
    <property type="project" value="TreeGrafter"/>
</dbReference>
<dbReference type="GO" id="GO:0003872">
    <property type="term" value="F:6-phosphofructokinase activity"/>
    <property type="evidence" value="ECO:0007669"/>
    <property type="project" value="UniProtKB-UniRule"/>
</dbReference>
<dbReference type="GO" id="GO:0016208">
    <property type="term" value="F:AMP binding"/>
    <property type="evidence" value="ECO:0007669"/>
    <property type="project" value="TreeGrafter"/>
</dbReference>
<dbReference type="GO" id="GO:0005524">
    <property type="term" value="F:ATP binding"/>
    <property type="evidence" value="ECO:0007669"/>
    <property type="project" value="UniProtKB-KW"/>
</dbReference>
<dbReference type="GO" id="GO:0070095">
    <property type="term" value="F:fructose-6-phosphate binding"/>
    <property type="evidence" value="ECO:0007669"/>
    <property type="project" value="TreeGrafter"/>
</dbReference>
<dbReference type="GO" id="GO:0042802">
    <property type="term" value="F:identical protein binding"/>
    <property type="evidence" value="ECO:0007669"/>
    <property type="project" value="TreeGrafter"/>
</dbReference>
<dbReference type="GO" id="GO:0046872">
    <property type="term" value="F:metal ion binding"/>
    <property type="evidence" value="ECO:0007669"/>
    <property type="project" value="UniProtKB-KW"/>
</dbReference>
<dbReference type="GO" id="GO:0048029">
    <property type="term" value="F:monosaccharide binding"/>
    <property type="evidence" value="ECO:0007669"/>
    <property type="project" value="TreeGrafter"/>
</dbReference>
<dbReference type="GO" id="GO:0061621">
    <property type="term" value="P:canonical glycolysis"/>
    <property type="evidence" value="ECO:0007669"/>
    <property type="project" value="TreeGrafter"/>
</dbReference>
<dbReference type="GO" id="GO:0030388">
    <property type="term" value="P:fructose 1,6-bisphosphate metabolic process"/>
    <property type="evidence" value="ECO:0007669"/>
    <property type="project" value="TreeGrafter"/>
</dbReference>
<dbReference type="GO" id="GO:0006002">
    <property type="term" value="P:fructose 6-phosphate metabolic process"/>
    <property type="evidence" value="ECO:0007669"/>
    <property type="project" value="InterPro"/>
</dbReference>
<dbReference type="CDD" id="cd00763">
    <property type="entry name" value="Bacterial_PFK"/>
    <property type="match status" value="1"/>
</dbReference>
<dbReference type="FunFam" id="3.40.50.450:FF:000001">
    <property type="entry name" value="ATP-dependent 6-phosphofructokinase"/>
    <property type="match status" value="1"/>
</dbReference>
<dbReference type="FunFam" id="3.40.50.460:FF:000002">
    <property type="entry name" value="ATP-dependent 6-phosphofructokinase"/>
    <property type="match status" value="1"/>
</dbReference>
<dbReference type="Gene3D" id="3.40.50.450">
    <property type="match status" value="1"/>
</dbReference>
<dbReference type="Gene3D" id="3.40.50.460">
    <property type="entry name" value="Phosphofructokinase domain"/>
    <property type="match status" value="1"/>
</dbReference>
<dbReference type="HAMAP" id="MF_00339">
    <property type="entry name" value="Phosphofructokinase_I_B1"/>
    <property type="match status" value="1"/>
</dbReference>
<dbReference type="InterPro" id="IPR022953">
    <property type="entry name" value="ATP_PFK"/>
</dbReference>
<dbReference type="InterPro" id="IPR012003">
    <property type="entry name" value="ATP_PFK_prok-type"/>
</dbReference>
<dbReference type="InterPro" id="IPR012828">
    <property type="entry name" value="PFKA_ATP_prok"/>
</dbReference>
<dbReference type="InterPro" id="IPR015912">
    <property type="entry name" value="Phosphofructokinase_CS"/>
</dbReference>
<dbReference type="InterPro" id="IPR000023">
    <property type="entry name" value="Phosphofructokinase_dom"/>
</dbReference>
<dbReference type="InterPro" id="IPR035966">
    <property type="entry name" value="PKF_sf"/>
</dbReference>
<dbReference type="NCBIfam" id="TIGR02482">
    <property type="entry name" value="PFKA_ATP"/>
    <property type="match status" value="1"/>
</dbReference>
<dbReference type="NCBIfam" id="NF002872">
    <property type="entry name" value="PRK03202.1"/>
    <property type="match status" value="1"/>
</dbReference>
<dbReference type="PANTHER" id="PTHR13697:SF4">
    <property type="entry name" value="ATP-DEPENDENT 6-PHOSPHOFRUCTOKINASE"/>
    <property type="match status" value="1"/>
</dbReference>
<dbReference type="PANTHER" id="PTHR13697">
    <property type="entry name" value="PHOSPHOFRUCTOKINASE"/>
    <property type="match status" value="1"/>
</dbReference>
<dbReference type="Pfam" id="PF00365">
    <property type="entry name" value="PFK"/>
    <property type="match status" value="1"/>
</dbReference>
<dbReference type="PIRSF" id="PIRSF000532">
    <property type="entry name" value="ATP_PFK_prok"/>
    <property type="match status" value="1"/>
</dbReference>
<dbReference type="PRINTS" id="PR00476">
    <property type="entry name" value="PHFRCTKINASE"/>
</dbReference>
<dbReference type="SUPFAM" id="SSF53784">
    <property type="entry name" value="Phosphofructokinase"/>
    <property type="match status" value="1"/>
</dbReference>
<dbReference type="PROSITE" id="PS00433">
    <property type="entry name" value="PHOSPHOFRUCTOKINASE"/>
    <property type="match status" value="1"/>
</dbReference>